<organism>
    <name type="scientific">Chromobacterium violaceum (strain ATCC 12472 / DSM 30191 / JCM 1249 / CCUG 213 / NBRC 12614 / NCIMB 9131 / NCTC 9757 / MK)</name>
    <dbReference type="NCBI Taxonomy" id="243365"/>
    <lineage>
        <taxon>Bacteria</taxon>
        <taxon>Pseudomonadati</taxon>
        <taxon>Pseudomonadota</taxon>
        <taxon>Betaproteobacteria</taxon>
        <taxon>Neisseriales</taxon>
        <taxon>Chromobacteriaceae</taxon>
        <taxon>Chromobacterium</taxon>
    </lineage>
</organism>
<name>Y3123_CHRVO</name>
<evidence type="ECO:0000255" key="1">
    <source>
        <dbReference type="HAMAP-Rule" id="MF_00693"/>
    </source>
</evidence>
<gene>
    <name type="ordered locus">CV_3123</name>
</gene>
<dbReference type="EMBL" id="AE016825">
    <property type="protein sequence ID" value="AAQ60790.1"/>
    <property type="molecule type" value="Genomic_DNA"/>
</dbReference>
<dbReference type="RefSeq" id="WP_011136670.1">
    <property type="nucleotide sequence ID" value="NC_005085.1"/>
</dbReference>
<dbReference type="SMR" id="Q7NTD5"/>
<dbReference type="STRING" id="243365.CV_3123"/>
<dbReference type="GeneID" id="66368840"/>
<dbReference type="KEGG" id="cvi:CV_3123"/>
<dbReference type="eggNOG" id="COG0217">
    <property type="taxonomic scope" value="Bacteria"/>
</dbReference>
<dbReference type="HOGENOM" id="CLU_062974_2_2_4"/>
<dbReference type="OrthoDB" id="9781053at2"/>
<dbReference type="Proteomes" id="UP000001424">
    <property type="component" value="Chromosome"/>
</dbReference>
<dbReference type="GO" id="GO:0005829">
    <property type="term" value="C:cytosol"/>
    <property type="evidence" value="ECO:0007669"/>
    <property type="project" value="TreeGrafter"/>
</dbReference>
<dbReference type="GO" id="GO:0003677">
    <property type="term" value="F:DNA binding"/>
    <property type="evidence" value="ECO:0007669"/>
    <property type="project" value="UniProtKB-UniRule"/>
</dbReference>
<dbReference type="GO" id="GO:0006355">
    <property type="term" value="P:regulation of DNA-templated transcription"/>
    <property type="evidence" value="ECO:0007669"/>
    <property type="project" value="UniProtKB-UniRule"/>
</dbReference>
<dbReference type="FunFam" id="1.10.10.200:FF:000001">
    <property type="entry name" value="Probable transcriptional regulatory protein YebC"/>
    <property type="match status" value="1"/>
</dbReference>
<dbReference type="FunFam" id="3.30.70.980:FF:000002">
    <property type="entry name" value="Probable transcriptional regulatory protein YebC"/>
    <property type="match status" value="1"/>
</dbReference>
<dbReference type="Gene3D" id="1.10.10.200">
    <property type="match status" value="1"/>
</dbReference>
<dbReference type="Gene3D" id="3.30.70.980">
    <property type="match status" value="2"/>
</dbReference>
<dbReference type="HAMAP" id="MF_00693">
    <property type="entry name" value="Transcrip_reg_TACO1"/>
    <property type="match status" value="1"/>
</dbReference>
<dbReference type="InterPro" id="IPR017856">
    <property type="entry name" value="Integrase-like_N"/>
</dbReference>
<dbReference type="InterPro" id="IPR048300">
    <property type="entry name" value="TACO1_YebC-like_2nd/3rd_dom"/>
</dbReference>
<dbReference type="InterPro" id="IPR049083">
    <property type="entry name" value="TACO1_YebC_N"/>
</dbReference>
<dbReference type="InterPro" id="IPR002876">
    <property type="entry name" value="Transcrip_reg_TACO1-like"/>
</dbReference>
<dbReference type="InterPro" id="IPR026564">
    <property type="entry name" value="Transcrip_reg_TACO1-like_dom3"/>
</dbReference>
<dbReference type="InterPro" id="IPR029072">
    <property type="entry name" value="YebC-like"/>
</dbReference>
<dbReference type="NCBIfam" id="NF001030">
    <property type="entry name" value="PRK00110.1"/>
    <property type="match status" value="1"/>
</dbReference>
<dbReference type="NCBIfam" id="NF009044">
    <property type="entry name" value="PRK12378.1"/>
    <property type="match status" value="1"/>
</dbReference>
<dbReference type="NCBIfam" id="TIGR01033">
    <property type="entry name" value="YebC/PmpR family DNA-binding transcriptional regulator"/>
    <property type="match status" value="1"/>
</dbReference>
<dbReference type="PANTHER" id="PTHR12532:SF6">
    <property type="entry name" value="TRANSCRIPTIONAL REGULATORY PROTEIN YEBC-RELATED"/>
    <property type="match status" value="1"/>
</dbReference>
<dbReference type="PANTHER" id="PTHR12532">
    <property type="entry name" value="TRANSLATIONAL ACTIVATOR OF CYTOCHROME C OXIDASE 1"/>
    <property type="match status" value="1"/>
</dbReference>
<dbReference type="Pfam" id="PF20772">
    <property type="entry name" value="TACO1_YebC_N"/>
    <property type="match status" value="1"/>
</dbReference>
<dbReference type="Pfam" id="PF01709">
    <property type="entry name" value="Transcrip_reg"/>
    <property type="match status" value="1"/>
</dbReference>
<dbReference type="SUPFAM" id="SSF75625">
    <property type="entry name" value="YebC-like"/>
    <property type="match status" value="1"/>
</dbReference>
<reference key="1">
    <citation type="journal article" date="2003" name="Proc. Natl. Acad. Sci. U.S.A.">
        <title>The complete genome sequence of Chromobacterium violaceum reveals remarkable and exploitable bacterial adaptability.</title>
        <authorList>
            <person name="Vasconcelos A.T.R."/>
            <person name="de Almeida D.F."/>
            <person name="Hungria M."/>
            <person name="Guimaraes C.T."/>
            <person name="Antonio R.V."/>
            <person name="Almeida F.C."/>
            <person name="de Almeida L.G.P."/>
            <person name="de Almeida R."/>
            <person name="Alves-Gomes J.A."/>
            <person name="Andrade E.M."/>
            <person name="Araripe J."/>
            <person name="de Araujo M.F.F."/>
            <person name="Astolfi-Filho S."/>
            <person name="Azevedo V."/>
            <person name="Baptista A.J."/>
            <person name="Bataus L.A.M."/>
            <person name="Batista J.S."/>
            <person name="Belo A."/>
            <person name="van den Berg C."/>
            <person name="Bogo M."/>
            <person name="Bonatto S."/>
            <person name="Bordignon J."/>
            <person name="Brigido M.M."/>
            <person name="Brito C.A."/>
            <person name="Brocchi M."/>
            <person name="Burity H.A."/>
            <person name="Camargo A.A."/>
            <person name="Cardoso D.D.P."/>
            <person name="Carneiro N.P."/>
            <person name="Carraro D.M."/>
            <person name="Carvalho C.M.B."/>
            <person name="Cascardo J.C.M."/>
            <person name="Cavada B.S."/>
            <person name="Chueire L.M.O."/>
            <person name="Creczynski-Pasa T.B."/>
            <person name="Cunha-Junior N.C."/>
            <person name="Fagundes N."/>
            <person name="Falcao C.L."/>
            <person name="Fantinatti F."/>
            <person name="Farias I.P."/>
            <person name="Felipe M.S.S."/>
            <person name="Ferrari L.P."/>
            <person name="Ferro J.A."/>
            <person name="Ferro M.I.T."/>
            <person name="Franco G.R."/>
            <person name="Freitas N.S.A."/>
            <person name="Furlan L.R."/>
            <person name="Gazzinelli R.T."/>
            <person name="Gomes E.A."/>
            <person name="Goncalves P.R."/>
            <person name="Grangeiro T.B."/>
            <person name="Grattapaglia D."/>
            <person name="Grisard E.C."/>
            <person name="Hanna E.S."/>
            <person name="Jardim S.N."/>
            <person name="Laurino J."/>
            <person name="Leoi L.C.T."/>
            <person name="Lima L.F.A."/>
            <person name="Loureiro M.F."/>
            <person name="Lyra M.C.C.P."/>
            <person name="Madeira H.M.F."/>
            <person name="Manfio G.P."/>
            <person name="Maranhao A.Q."/>
            <person name="Martins W.S."/>
            <person name="di Mauro S.M.Z."/>
            <person name="de Medeiros S.R.B."/>
            <person name="Meissner R.V."/>
            <person name="Moreira M.A.M."/>
            <person name="Nascimento F.F."/>
            <person name="Nicolas M.F."/>
            <person name="Oliveira J.G."/>
            <person name="Oliveira S.C."/>
            <person name="Paixao R.F.C."/>
            <person name="Parente J.A."/>
            <person name="Pedrosa F.O."/>
            <person name="Pena S.D.J."/>
            <person name="Pereira J.O."/>
            <person name="Pereira M."/>
            <person name="Pinto L.S.R.C."/>
            <person name="Pinto L.S."/>
            <person name="Porto J.I.R."/>
            <person name="Potrich D.P."/>
            <person name="Ramalho-Neto C.E."/>
            <person name="Reis A.M.M."/>
            <person name="Rigo L.U."/>
            <person name="Rondinelli E."/>
            <person name="Santos E.B.P."/>
            <person name="Santos F.R."/>
            <person name="Schneider M.P.C."/>
            <person name="Seuanez H.N."/>
            <person name="Silva A.M.R."/>
            <person name="da Silva A.L.C."/>
            <person name="Silva D.W."/>
            <person name="Silva R."/>
            <person name="Simoes I.C."/>
            <person name="Simon D."/>
            <person name="Soares C.M.A."/>
            <person name="Soares R.B.A."/>
            <person name="Souza E.M."/>
            <person name="Souza K.R.L."/>
            <person name="Souza R.C."/>
            <person name="Steffens M.B.R."/>
            <person name="Steindel M."/>
            <person name="Teixeira S.R."/>
            <person name="Urmenyi T."/>
            <person name="Vettore A."/>
            <person name="Wassem R."/>
            <person name="Zaha A."/>
            <person name="Simpson A.J.G."/>
        </authorList>
    </citation>
    <scope>NUCLEOTIDE SEQUENCE [LARGE SCALE GENOMIC DNA]</scope>
    <source>
        <strain>ATCC 12472 / DSM 30191 / JCM 1249 / CCUG 213 / NBRC 12614 / NCIMB 9131 / NCTC 9757 / MK</strain>
    </source>
</reference>
<comment type="subcellular location">
    <subcellularLocation>
        <location evidence="1">Cytoplasm</location>
    </subcellularLocation>
</comment>
<comment type="similarity">
    <text evidence="1">Belongs to the TACO1 family.</text>
</comment>
<protein>
    <recommendedName>
        <fullName evidence="1">Probable transcriptional regulatory protein CV_3123</fullName>
    </recommendedName>
</protein>
<accession>Q7NTD5</accession>
<feature type="chain" id="PRO_0000175787" description="Probable transcriptional regulatory protein CV_3123">
    <location>
        <begin position="1"/>
        <end position="241"/>
    </location>
</feature>
<proteinExistence type="inferred from homology"/>
<keyword id="KW-0963">Cytoplasm</keyword>
<keyword id="KW-0238">DNA-binding</keyword>
<keyword id="KW-1185">Reference proteome</keyword>
<keyword id="KW-0804">Transcription</keyword>
<keyword id="KW-0805">Transcription regulation</keyword>
<sequence>MAGHSKWANIQHRKGRQDAKRGKIFTRLIKEITVAAKMGGGDANMNPRLRLAVDKAKAESMPKDNIENAIKRGTGQLDGVDYVECRYEGYGIAGAAVMVDCLTDNKTRTVADVRHAFSKYGGNMGTDGCVAFQFKHCGYLVFAPGVDEDALMEAALEAGAEDVVSNDDGSIEVITGPYEFSDVKDALEAKGFKSEMGEVTMRAENETELSGDDAVRMQKLLDALEDLDDVQDVYTSAVIGE</sequence>